<protein>
    <recommendedName>
        <fullName evidence="7">NAC domain-containing protein 68</fullName>
        <shortName evidence="7">ONAC068</shortName>
    </recommendedName>
    <alternativeName>
        <fullName evidence="6">OsNAC4</fullName>
    </alternativeName>
</protein>
<comment type="function">
    <text evidence="1">Probable transcription factor involved in stress response.</text>
</comment>
<comment type="subcellular location">
    <subcellularLocation>
        <location evidence="2">Nucleus</location>
    </subcellularLocation>
</comment>
<comment type="tissue specificity">
    <text evidence="3">Expressed in stems, leaf blades and callus. Weakly expressed in developing flowers.</text>
</comment>
<comment type="induction">
    <text evidence="4 5">Induced by salt stress (PubMed:18813954, PubMed:20632034). Induced by dehydration, cold stress and methyl jasmonate (PubMed:20632034).</text>
</comment>
<comment type="domain">
    <text evidence="2">The NAC domain includes a DNA binding domain and a dimerization domain.</text>
</comment>
<comment type="sequence caution" evidence="8">
    <conflict type="erroneous initiation">
        <sequence resource="EMBL-CDS" id="BAA89798"/>
    </conflict>
    <text>Truncated N-terminus.</text>
</comment>
<comment type="sequence caution" evidence="8">
    <conflict type="erroneous initiation">
        <sequence resource="EMBL-CDS" id="BAB64820"/>
    </conflict>
    <text>Truncated N-terminus.</text>
</comment>
<comment type="sequence caution" evidence="8">
    <conflict type="erroneous initiation">
        <sequence resource="EMBL-CDS" id="BAD82705"/>
    </conflict>
    <text>Truncated N-terminus.</text>
</comment>
<organism>
    <name type="scientific">Oryza sativa subsp. japonica</name>
    <name type="common">Rice</name>
    <dbReference type="NCBI Taxonomy" id="39947"/>
    <lineage>
        <taxon>Eukaryota</taxon>
        <taxon>Viridiplantae</taxon>
        <taxon>Streptophyta</taxon>
        <taxon>Embryophyta</taxon>
        <taxon>Tracheophyta</taxon>
        <taxon>Spermatophyta</taxon>
        <taxon>Magnoliopsida</taxon>
        <taxon>Liliopsida</taxon>
        <taxon>Poales</taxon>
        <taxon>Poaceae</taxon>
        <taxon>BOP clade</taxon>
        <taxon>Oryzoideae</taxon>
        <taxon>Oryzeae</taxon>
        <taxon>Oryzinae</taxon>
        <taxon>Oryza</taxon>
        <taxon>Oryza sativa</taxon>
    </lineage>
</organism>
<reference key="1">
    <citation type="journal article" date="2000" name="Mol. Gen. Genet.">
        <title>Molecular analysis of the NAC gene family in rice.</title>
        <authorList>
            <person name="Kikuchi K."/>
            <person name="Ueguchi-Tanaka M."/>
            <person name="Yoshida K.T."/>
            <person name="Nagato Y."/>
            <person name="Matsusoka M."/>
            <person name="Hirano H.-Y."/>
        </authorList>
    </citation>
    <scope>NUCLEOTIDE SEQUENCE [MRNA]</scope>
    <scope>TISSUE SPECIFICITY</scope>
</reference>
<reference key="2">
    <citation type="submission" date="2005-03" db="EMBL/GenBank/DDBJ databases">
        <title>Molecular cloning and expression of a Magnaporthe grisea induced cDNA encoding a NAC protein.</title>
        <authorList>
            <person name="Lin R.-M."/>
            <person name="Zhao W.-S."/>
            <person name="Meng X.-B."/>
            <person name="Peng Y.-L."/>
        </authorList>
    </citation>
    <scope>NUCLEOTIDE SEQUENCE [MRNA]</scope>
</reference>
<reference key="3">
    <citation type="journal article" date="2002" name="Nature">
        <title>The genome sequence and structure of rice chromosome 1.</title>
        <authorList>
            <person name="Sasaki T."/>
            <person name="Matsumoto T."/>
            <person name="Yamamoto K."/>
            <person name="Sakata K."/>
            <person name="Baba T."/>
            <person name="Katayose Y."/>
            <person name="Wu J."/>
            <person name="Niimura Y."/>
            <person name="Cheng Z."/>
            <person name="Nagamura Y."/>
            <person name="Antonio B.A."/>
            <person name="Kanamori H."/>
            <person name="Hosokawa S."/>
            <person name="Masukawa M."/>
            <person name="Arikawa K."/>
            <person name="Chiden Y."/>
            <person name="Hayashi M."/>
            <person name="Okamoto M."/>
            <person name="Ando T."/>
            <person name="Aoki H."/>
            <person name="Arita K."/>
            <person name="Hamada M."/>
            <person name="Harada C."/>
            <person name="Hijishita S."/>
            <person name="Honda M."/>
            <person name="Ichikawa Y."/>
            <person name="Idonuma A."/>
            <person name="Iijima M."/>
            <person name="Ikeda M."/>
            <person name="Ikeno M."/>
            <person name="Ito S."/>
            <person name="Ito T."/>
            <person name="Ito Y."/>
            <person name="Ito Y."/>
            <person name="Iwabuchi A."/>
            <person name="Kamiya K."/>
            <person name="Karasawa W."/>
            <person name="Katagiri S."/>
            <person name="Kikuta A."/>
            <person name="Kobayashi N."/>
            <person name="Kono I."/>
            <person name="Machita K."/>
            <person name="Maehara T."/>
            <person name="Mizuno H."/>
            <person name="Mizubayashi T."/>
            <person name="Mukai Y."/>
            <person name="Nagasaki H."/>
            <person name="Nakashima M."/>
            <person name="Nakama Y."/>
            <person name="Nakamichi Y."/>
            <person name="Nakamura M."/>
            <person name="Namiki N."/>
            <person name="Negishi M."/>
            <person name="Ohta I."/>
            <person name="Ono N."/>
            <person name="Saji S."/>
            <person name="Sakai K."/>
            <person name="Shibata M."/>
            <person name="Shimokawa T."/>
            <person name="Shomura A."/>
            <person name="Song J."/>
            <person name="Takazaki Y."/>
            <person name="Terasawa K."/>
            <person name="Tsuji K."/>
            <person name="Waki K."/>
            <person name="Yamagata H."/>
            <person name="Yamane H."/>
            <person name="Yoshiki S."/>
            <person name="Yoshihara R."/>
            <person name="Yukawa K."/>
            <person name="Zhong H."/>
            <person name="Iwama H."/>
            <person name="Endo T."/>
            <person name="Ito H."/>
            <person name="Hahn J.H."/>
            <person name="Kim H.-I."/>
            <person name="Eun M.-Y."/>
            <person name="Yano M."/>
            <person name="Jiang J."/>
            <person name="Gojobori T."/>
        </authorList>
    </citation>
    <scope>NUCLEOTIDE SEQUENCE [LARGE SCALE GENOMIC DNA]</scope>
    <source>
        <strain>cv. Nipponbare</strain>
    </source>
</reference>
<reference key="4">
    <citation type="journal article" date="2005" name="Nature">
        <title>The map-based sequence of the rice genome.</title>
        <authorList>
            <consortium name="International rice genome sequencing project (IRGSP)"/>
        </authorList>
    </citation>
    <scope>NUCLEOTIDE SEQUENCE [LARGE SCALE GENOMIC DNA]</scope>
    <source>
        <strain>cv. Nipponbare</strain>
    </source>
</reference>
<reference key="5">
    <citation type="journal article" date="2008" name="Nucleic Acids Res.">
        <title>The rice annotation project database (RAP-DB): 2008 update.</title>
        <authorList>
            <consortium name="The rice annotation project (RAP)"/>
        </authorList>
    </citation>
    <scope>GENOME REANNOTATION</scope>
    <source>
        <strain>cv. Nipponbare</strain>
    </source>
</reference>
<reference key="6">
    <citation type="journal article" date="2013" name="Rice">
        <title>Improvement of the Oryza sativa Nipponbare reference genome using next generation sequence and optical map data.</title>
        <authorList>
            <person name="Kawahara Y."/>
            <person name="de la Bastide M."/>
            <person name="Hamilton J.P."/>
            <person name="Kanamori H."/>
            <person name="McCombie W.R."/>
            <person name="Ouyang S."/>
            <person name="Schwartz D.C."/>
            <person name="Tanaka T."/>
            <person name="Wu J."/>
            <person name="Zhou S."/>
            <person name="Childs K.L."/>
            <person name="Davidson R.M."/>
            <person name="Lin H."/>
            <person name="Quesada-Ocampo L."/>
            <person name="Vaillancourt B."/>
            <person name="Sakai H."/>
            <person name="Lee S.S."/>
            <person name="Kim J."/>
            <person name="Numa H."/>
            <person name="Itoh T."/>
            <person name="Buell C.R."/>
            <person name="Matsumoto T."/>
        </authorList>
    </citation>
    <scope>GENOME REANNOTATION</scope>
    <source>
        <strain>cv. Nipponbare</strain>
    </source>
</reference>
<reference key="7">
    <citation type="journal article" date="2003" name="Science">
        <title>Collection, mapping, and annotation of over 28,000 cDNA clones from japonica rice.</title>
        <authorList>
            <consortium name="The rice full-length cDNA consortium"/>
        </authorList>
    </citation>
    <scope>NUCLEOTIDE SEQUENCE [LARGE SCALE MRNA]</scope>
    <source>
        <strain>cv. Nipponbare</strain>
    </source>
</reference>
<reference key="8">
    <citation type="journal article" date="2003" name="DNA Res.">
        <title>Comprehensive analysis of NAC family genes in Oryza sativa and Arabidopsis thaliana.</title>
        <authorList>
            <person name="Ooka H."/>
            <person name="Satoh K."/>
            <person name="Doi K."/>
            <person name="Nagata T."/>
            <person name="Otomo Y."/>
            <person name="Murakami K."/>
            <person name="Matsubara K."/>
            <person name="Osato N."/>
            <person name="Kawai J."/>
            <person name="Carninci P."/>
            <person name="Hayashizaki Y."/>
            <person name="Suzuki K."/>
            <person name="Kojima K."/>
            <person name="Takahara Y."/>
            <person name="Yamamoto K."/>
            <person name="Kikuchi S."/>
        </authorList>
    </citation>
    <scope>GENE FAMILY</scope>
    <scope>NOMENCLATURE</scope>
</reference>
<reference key="9">
    <citation type="journal article" date="2008" name="Mol. Genet. Genomics">
        <title>Systematic sequence analysis and identification of tissue-specific or stress-responsive genes of NAC transcription factor family in rice.</title>
        <authorList>
            <person name="Fang Y."/>
            <person name="You J."/>
            <person name="Xie K."/>
            <person name="Xie W."/>
            <person name="Xiong L."/>
        </authorList>
    </citation>
    <scope>INDUCTION BY SALT STRESS</scope>
</reference>
<reference key="10">
    <citation type="journal article" date="2010" name="Mol. Genet. Genomics">
        <title>The abiotic stress-responsive NAC-type transcription factor OsNAC5 regulates stress-inducible genes and stress tolerance in rice.</title>
        <authorList>
            <person name="Takasaki H."/>
            <person name="Maruyama K."/>
            <person name="Kidokoro S."/>
            <person name="Ito Y."/>
            <person name="Fujita Y."/>
            <person name="Shinozaki K."/>
            <person name="Yamaguchi-Shinozaki K."/>
            <person name="Nakashima K."/>
        </authorList>
    </citation>
    <scope>INDUCTION</scope>
</reference>
<evidence type="ECO:0000250" key="1">
    <source>
        <dbReference type="UniProtKB" id="Q7F2L3"/>
    </source>
</evidence>
<evidence type="ECO:0000255" key="2">
    <source>
        <dbReference type="PROSITE-ProRule" id="PRU00353"/>
    </source>
</evidence>
<evidence type="ECO:0000269" key="3">
    <source>
    </source>
</evidence>
<evidence type="ECO:0000269" key="4">
    <source>
    </source>
</evidence>
<evidence type="ECO:0000269" key="5">
    <source>
    </source>
</evidence>
<evidence type="ECO:0000303" key="6">
    <source>
    </source>
</evidence>
<evidence type="ECO:0000303" key="7">
    <source>
    </source>
</evidence>
<evidence type="ECO:0000305" key="8"/>
<evidence type="ECO:0000312" key="9">
    <source>
        <dbReference type="EMBL" id="BAB64820.1"/>
    </source>
</evidence>
<evidence type="ECO:0000312" key="10">
    <source>
        <dbReference type="EMBL" id="BAD82705.1"/>
    </source>
</evidence>
<evidence type="ECO:0000312" key="11">
    <source>
        <dbReference type="EMBL" id="BAS74921.1"/>
    </source>
</evidence>
<sequence length="318" mass="35347">MEMAAAVGGSGRRDAEAELNLPPGFRFHPTDEELVVHYLCRKVARQPLPVPIIAEVDLYKLDPWDLPEKALFGRKEWYFFTPRDRKYPNGSRPNRAAGRGYWKATGADKPVAPKGSARTVGIKKALVFYSGKAPRGVKTDWIMHEYRLADADRAPGGKKGSQKLDEWVLCRLYNKKNNWEKVKLEQQDVASVAAAAPRNHHHQNGEVMDAAAADTMSDSFQTHDSDIDNASAGLRHGGCGGGGFGDVAPPRNGFVTVKEDNDWFTGLNFDELQPPYMMNLQHMQMQMVNPAAPGHDGGYLQSISSPQMKMWQTILPPF</sequence>
<keyword id="KW-0238">DNA-binding</keyword>
<keyword id="KW-0539">Nucleus</keyword>
<keyword id="KW-1185">Reference proteome</keyword>
<keyword id="KW-0346">Stress response</keyword>
<keyword id="KW-0804">Transcription</keyword>
<keyword id="KW-0805">Transcription regulation</keyword>
<feature type="chain" id="PRO_0000132319" description="NAC domain-containing protein 68">
    <location>
        <begin position="1"/>
        <end position="318"/>
    </location>
</feature>
<feature type="domain" description="NAC" evidence="2">
    <location>
        <begin position="21"/>
        <end position="175"/>
    </location>
</feature>
<feature type="sequence conflict" description="In Ref. 7; AK073848." evidence="8" ref="7">
    <original>E</original>
    <variation>G</variation>
    <location>
        <position position="166"/>
    </location>
</feature>
<feature type="sequence conflict" description="In Ref. 7; AK073848." evidence="8" ref="7">
    <original>P</original>
    <variation>R</variation>
    <location>
        <position position="306"/>
    </location>
</feature>
<proteinExistence type="evidence at transcript level"/>
<name>NAC68_ORYSJ</name>
<dbReference type="EMBL" id="AB028183">
    <property type="protein sequence ID" value="BAA89798.1"/>
    <property type="status" value="ALT_INIT"/>
    <property type="molecule type" value="mRNA"/>
</dbReference>
<dbReference type="EMBL" id="AY986504">
    <property type="protein sequence ID" value="AAX85684.1"/>
    <property type="molecule type" value="mRNA"/>
</dbReference>
<dbReference type="EMBL" id="AP003411">
    <property type="protein sequence ID" value="BAB64820.1"/>
    <property type="status" value="ALT_INIT"/>
    <property type="molecule type" value="Genomic_DNA"/>
</dbReference>
<dbReference type="EMBL" id="AP004331">
    <property type="protein sequence ID" value="BAD82705.1"/>
    <property type="status" value="ALT_INIT"/>
    <property type="molecule type" value="Genomic_DNA"/>
</dbReference>
<dbReference type="EMBL" id="AP008207">
    <property type="protein sequence ID" value="BAF06531.1"/>
    <property type="molecule type" value="Genomic_DNA"/>
</dbReference>
<dbReference type="EMBL" id="AP014957">
    <property type="protein sequence ID" value="BAS74921.1"/>
    <property type="molecule type" value="Genomic_DNA"/>
</dbReference>
<dbReference type="EMBL" id="AK073848">
    <property type="status" value="NOT_ANNOTATED_CDS"/>
    <property type="molecule type" value="mRNA"/>
</dbReference>
<dbReference type="RefSeq" id="XP_015623706.1">
    <property type="nucleotide sequence ID" value="XM_015768220.1"/>
</dbReference>
<dbReference type="SMR" id="Q52QH4"/>
<dbReference type="PaxDb" id="39947-Q52QH4"/>
<dbReference type="EnsemblPlants" id="Os01t0816100-01">
    <property type="protein sequence ID" value="Os01t0816100-01"/>
    <property type="gene ID" value="Os01g0816100"/>
</dbReference>
<dbReference type="Gramene" id="Os01t0816100-01">
    <property type="protein sequence ID" value="Os01t0816100-01"/>
    <property type="gene ID" value="Os01g0816100"/>
</dbReference>
<dbReference type="KEGG" id="dosa:Os01g0816100"/>
<dbReference type="eggNOG" id="ENOG502QRBC">
    <property type="taxonomic scope" value="Eukaryota"/>
</dbReference>
<dbReference type="HOGENOM" id="CLU_035664_5_2_1"/>
<dbReference type="InParanoid" id="Q52QH4"/>
<dbReference type="OMA" id="DNASGMQ"/>
<dbReference type="OrthoDB" id="1921961at2759"/>
<dbReference type="PlantReactome" id="R-OSA-6788019">
    <property type="pathway name" value="Salicylic acid signaling"/>
</dbReference>
<dbReference type="Proteomes" id="UP000000763">
    <property type="component" value="Chromosome 1"/>
</dbReference>
<dbReference type="Proteomes" id="UP000059680">
    <property type="component" value="Chromosome 1"/>
</dbReference>
<dbReference type="GO" id="GO:0005634">
    <property type="term" value="C:nucleus"/>
    <property type="evidence" value="ECO:0007669"/>
    <property type="project" value="UniProtKB-SubCell"/>
</dbReference>
<dbReference type="GO" id="GO:0003677">
    <property type="term" value="F:DNA binding"/>
    <property type="evidence" value="ECO:0007669"/>
    <property type="project" value="UniProtKB-KW"/>
</dbReference>
<dbReference type="GO" id="GO:0006355">
    <property type="term" value="P:regulation of DNA-templated transcription"/>
    <property type="evidence" value="ECO:0007669"/>
    <property type="project" value="InterPro"/>
</dbReference>
<dbReference type="FunFam" id="2.170.150.80:FF:000004">
    <property type="entry name" value="NAC transcription factor"/>
    <property type="match status" value="1"/>
</dbReference>
<dbReference type="Gene3D" id="2.170.150.80">
    <property type="entry name" value="NAC domain"/>
    <property type="match status" value="1"/>
</dbReference>
<dbReference type="InterPro" id="IPR003441">
    <property type="entry name" value="NAC-dom"/>
</dbReference>
<dbReference type="InterPro" id="IPR036093">
    <property type="entry name" value="NAC_dom_sf"/>
</dbReference>
<dbReference type="PANTHER" id="PTHR31719:SF186">
    <property type="entry name" value="NAC DOMAIN-CONTAINING PROTEIN 68"/>
    <property type="match status" value="1"/>
</dbReference>
<dbReference type="PANTHER" id="PTHR31719">
    <property type="entry name" value="NAC TRANSCRIPTION FACTOR 56"/>
    <property type="match status" value="1"/>
</dbReference>
<dbReference type="Pfam" id="PF02365">
    <property type="entry name" value="NAM"/>
    <property type="match status" value="1"/>
</dbReference>
<dbReference type="SUPFAM" id="SSF101941">
    <property type="entry name" value="NAC domain"/>
    <property type="match status" value="1"/>
</dbReference>
<dbReference type="PROSITE" id="PS51005">
    <property type="entry name" value="NAC"/>
    <property type="match status" value="1"/>
</dbReference>
<gene>
    <name evidence="7" type="primary">NAC068</name>
    <name evidence="6" type="synonym">NAC4</name>
    <name evidence="11" type="ordered locus">Os01g0816100</name>
    <name evidence="8" type="ordered locus">LOC_Os01g60020</name>
    <name evidence="9" type="ORF">B1148D12.1</name>
    <name evidence="10" type="ORF">OSJNBa0085D07.44</name>
</gene>
<accession>Q52QH4</accession>
<accession>Q0JI97</accession>
<accession>Q7F353</accession>
<accession>Q9MBC6</accession>